<feature type="chain" id="PRO_0000173497" description="Cell division control protein 10">
    <location>
        <begin position="1"/>
        <end position="357"/>
    </location>
</feature>
<feature type="domain" description="Septin-type G" evidence="2">
    <location>
        <begin position="34"/>
        <end position="306"/>
    </location>
</feature>
<feature type="region of interest" description="G1 motif" evidence="2">
    <location>
        <begin position="44"/>
        <end position="51"/>
    </location>
</feature>
<feature type="region of interest" description="G3 motif" evidence="2">
    <location>
        <begin position="101"/>
        <end position="104"/>
    </location>
</feature>
<feature type="region of interest" description="G4 motif" evidence="2">
    <location>
        <begin position="183"/>
        <end position="186"/>
    </location>
</feature>
<feature type="region of interest" description="Disordered" evidence="3">
    <location>
        <begin position="310"/>
        <end position="357"/>
    </location>
</feature>
<feature type="binding site" evidence="1">
    <location>
        <begin position="44"/>
        <end position="51"/>
    </location>
    <ligand>
        <name>GTP</name>
        <dbReference type="ChEBI" id="CHEBI:37565"/>
    </ligand>
</feature>
<feature type="binding site" evidence="1">
    <location>
        <position position="78"/>
    </location>
    <ligand>
        <name>GTP</name>
        <dbReference type="ChEBI" id="CHEBI:37565"/>
    </ligand>
</feature>
<feature type="binding site" evidence="1">
    <location>
        <position position="104"/>
    </location>
    <ligand>
        <name>GTP</name>
        <dbReference type="ChEBI" id="CHEBI:37565"/>
    </ligand>
</feature>
<feature type="binding site" evidence="1">
    <location>
        <begin position="184"/>
        <end position="192"/>
    </location>
    <ligand>
        <name>GTP</name>
        <dbReference type="ChEBI" id="CHEBI:37565"/>
    </ligand>
</feature>
<feature type="binding site" evidence="1">
    <location>
        <position position="240"/>
    </location>
    <ligand>
        <name>GTP</name>
        <dbReference type="ChEBI" id="CHEBI:37565"/>
    </ligand>
</feature>
<feature type="binding site" evidence="1">
    <location>
        <position position="255"/>
    </location>
    <ligand>
        <name>GTP</name>
        <dbReference type="ChEBI" id="CHEBI:37565"/>
    </ligand>
</feature>
<feature type="sequence conflict" description="In Ref. 1; CAA81090." evidence="4" ref="1">
    <original>T</original>
    <variation>A</variation>
    <location>
        <position position="338"/>
    </location>
</feature>
<protein>
    <recommendedName>
        <fullName>Cell division control protein 10</fullName>
    </recommendedName>
</protein>
<gene>
    <name type="primary">CDC10</name>
    <name type="ordered locus">CAALFM_CR04570CA</name>
    <name type="ORF">CaO19.548</name>
    <name type="ORF">CaO19.8183</name>
</gene>
<organism>
    <name type="scientific">Candida albicans (strain SC5314 / ATCC MYA-2876)</name>
    <name type="common">Yeast</name>
    <dbReference type="NCBI Taxonomy" id="237561"/>
    <lineage>
        <taxon>Eukaryota</taxon>
        <taxon>Fungi</taxon>
        <taxon>Dikarya</taxon>
        <taxon>Ascomycota</taxon>
        <taxon>Saccharomycotina</taxon>
        <taxon>Pichiomycetes</taxon>
        <taxon>Debaryomycetaceae</taxon>
        <taxon>Candida/Lodderomyces clade</taxon>
        <taxon>Candida</taxon>
    </lineage>
</organism>
<comment type="function">
    <text>Plays a role in the cell cycle. Involved in the formation of the ring of filaments in the neck region at the mother-bud junction during mitosis.</text>
</comment>
<comment type="subcellular location">
    <subcellularLocation>
        <location evidence="1">Bud neck</location>
    </subcellularLocation>
    <text evidence="1">Present at the bud neck during cell division.</text>
</comment>
<comment type="developmental stage">
    <text>Expressed at higher levels in cells growing as hyphae than in those growing as budding yeasts.</text>
</comment>
<comment type="similarity">
    <text evidence="2">Belongs to the TRAFAC class TrmE-Era-EngA-EngB-Septin-like GTPase superfamily. Septin GTPase family.</text>
</comment>
<proteinExistence type="evidence at transcript level"/>
<evidence type="ECO:0000250" key="1"/>
<evidence type="ECO:0000255" key="2">
    <source>
        <dbReference type="PROSITE-ProRule" id="PRU01056"/>
    </source>
</evidence>
<evidence type="ECO:0000256" key="3">
    <source>
        <dbReference type="SAM" id="MobiDB-lite"/>
    </source>
</evidence>
<evidence type="ECO:0000305" key="4"/>
<reference key="1">
    <citation type="journal article" date="1994" name="Mol. Gen. Genet.">
        <title>Homologs of the yeast neck filament associated genes: isolation and sequence analysis of Candida albicans CDC3 and CDC10.</title>
        <authorList>
            <person name="Didomenico B.J."/>
            <person name="Brown N.H."/>
            <person name="Lupisella J."/>
            <person name="Greene J.R."/>
            <person name="Yanko M."/>
            <person name="Koltin Y."/>
        </authorList>
    </citation>
    <scope>NUCLEOTIDE SEQUENCE [GENOMIC DNA]</scope>
    <source>
        <strain>C792</strain>
    </source>
</reference>
<reference key="2">
    <citation type="journal article" date="2004" name="Proc. Natl. Acad. Sci. U.S.A.">
        <title>The diploid genome sequence of Candida albicans.</title>
        <authorList>
            <person name="Jones T."/>
            <person name="Federspiel N.A."/>
            <person name="Chibana H."/>
            <person name="Dungan J."/>
            <person name="Kalman S."/>
            <person name="Magee B.B."/>
            <person name="Newport G."/>
            <person name="Thorstenson Y.R."/>
            <person name="Agabian N."/>
            <person name="Magee P.T."/>
            <person name="Davis R.W."/>
            <person name="Scherer S."/>
        </authorList>
    </citation>
    <scope>NUCLEOTIDE SEQUENCE [LARGE SCALE GENOMIC DNA]</scope>
    <source>
        <strain>SC5314 / ATCC MYA-2876</strain>
    </source>
</reference>
<reference key="3">
    <citation type="journal article" date="2007" name="Genome Biol.">
        <title>Assembly of the Candida albicans genome into sixteen supercontigs aligned on the eight chromosomes.</title>
        <authorList>
            <person name="van het Hoog M."/>
            <person name="Rast T.J."/>
            <person name="Martchenko M."/>
            <person name="Grindle S."/>
            <person name="Dignard D."/>
            <person name="Hogues H."/>
            <person name="Cuomo C."/>
            <person name="Berriman M."/>
            <person name="Scherer S."/>
            <person name="Magee B.B."/>
            <person name="Whiteway M."/>
            <person name="Chibana H."/>
            <person name="Nantel A."/>
            <person name="Magee P.T."/>
        </authorList>
    </citation>
    <scope>GENOME REANNOTATION</scope>
    <source>
        <strain>SC5314 / ATCC MYA-2876</strain>
    </source>
</reference>
<reference key="4">
    <citation type="journal article" date="2013" name="Genome Biol.">
        <title>Assembly of a phased diploid Candida albicans genome facilitates allele-specific measurements and provides a simple model for repeat and indel structure.</title>
        <authorList>
            <person name="Muzzey D."/>
            <person name="Schwartz K."/>
            <person name="Weissman J.S."/>
            <person name="Sherlock G."/>
        </authorList>
    </citation>
    <scope>NUCLEOTIDE SEQUENCE [LARGE SCALE GENOMIC DNA]</scope>
    <scope>GENOME REANNOTATION</scope>
    <source>
        <strain>SC5314 / ATCC MYA-2876</strain>
    </source>
</reference>
<name>CDC10_CANAL</name>
<dbReference type="EMBL" id="Z25870">
    <property type="protein sequence ID" value="CAA81090.1"/>
    <property type="molecule type" value="Genomic_DNA"/>
</dbReference>
<dbReference type="EMBL" id="CP017630">
    <property type="protein sequence ID" value="AOW31193.1"/>
    <property type="molecule type" value="Genomic_DNA"/>
</dbReference>
<dbReference type="PIR" id="S43278">
    <property type="entry name" value="S43278"/>
</dbReference>
<dbReference type="RefSeq" id="XP_717411.2">
    <property type="nucleotide sequence ID" value="XM_712318.2"/>
</dbReference>
<dbReference type="SMR" id="P39827"/>
<dbReference type="BioGRID" id="1223999">
    <property type="interactions" value="7"/>
</dbReference>
<dbReference type="FunCoup" id="P39827">
    <property type="interactions" value="256"/>
</dbReference>
<dbReference type="STRING" id="237561.P39827"/>
<dbReference type="EnsemblFungi" id="CR_04570C_A-T">
    <property type="protein sequence ID" value="CR_04570C_A-T-p1"/>
    <property type="gene ID" value="CR_04570C_A"/>
</dbReference>
<dbReference type="GeneID" id="3640947"/>
<dbReference type="KEGG" id="cal:CAALFM_CR04570CA"/>
<dbReference type="CGD" id="CAL0000188354">
    <property type="gene designation" value="CDC10"/>
</dbReference>
<dbReference type="VEuPathDB" id="FungiDB:CR_04570C_A"/>
<dbReference type="eggNOG" id="KOG1547">
    <property type="taxonomic scope" value="Eukaryota"/>
</dbReference>
<dbReference type="HOGENOM" id="CLU_017718_7_1_1"/>
<dbReference type="InParanoid" id="P39827"/>
<dbReference type="OMA" id="QCEFVYL"/>
<dbReference type="OrthoDB" id="416553at2759"/>
<dbReference type="PHI-base" id="PHI:281"/>
<dbReference type="PRO" id="PR:P39827"/>
<dbReference type="Proteomes" id="UP000000559">
    <property type="component" value="Chromosome R"/>
</dbReference>
<dbReference type="GO" id="GO:0005938">
    <property type="term" value="C:cell cortex"/>
    <property type="evidence" value="ECO:0000314"/>
    <property type="project" value="CGD"/>
</dbReference>
<dbReference type="GO" id="GO:0032153">
    <property type="term" value="C:cell division site"/>
    <property type="evidence" value="ECO:0000318"/>
    <property type="project" value="GO_Central"/>
</dbReference>
<dbReference type="GO" id="GO:0030428">
    <property type="term" value="C:cell septum"/>
    <property type="evidence" value="ECO:0000314"/>
    <property type="project" value="CGD"/>
</dbReference>
<dbReference type="GO" id="GO:0005935">
    <property type="term" value="C:cellular bud neck"/>
    <property type="evidence" value="ECO:0000314"/>
    <property type="project" value="CGD"/>
</dbReference>
<dbReference type="GO" id="GO:0000144">
    <property type="term" value="C:cellular bud neck septin ring"/>
    <property type="evidence" value="ECO:0000314"/>
    <property type="project" value="CGD"/>
</dbReference>
<dbReference type="GO" id="GO:1990317">
    <property type="term" value="C:Gin4 complex"/>
    <property type="evidence" value="ECO:0007669"/>
    <property type="project" value="EnsemblFungi"/>
</dbReference>
<dbReference type="GO" id="GO:0001411">
    <property type="term" value="C:hyphal tip"/>
    <property type="evidence" value="ECO:0000314"/>
    <property type="project" value="CGD"/>
</dbReference>
<dbReference type="GO" id="GO:0000131">
    <property type="term" value="C:incipient cellular bud site"/>
    <property type="evidence" value="ECO:0000314"/>
    <property type="project" value="CGD"/>
</dbReference>
<dbReference type="GO" id="GO:0001400">
    <property type="term" value="C:mating projection base"/>
    <property type="evidence" value="ECO:0007669"/>
    <property type="project" value="EnsemblFungi"/>
</dbReference>
<dbReference type="GO" id="GO:0032175">
    <property type="term" value="C:mating projection septin ring"/>
    <property type="evidence" value="ECO:0007669"/>
    <property type="project" value="EnsemblFungi"/>
</dbReference>
<dbReference type="GO" id="GO:0036391">
    <property type="term" value="C:medial cortex septin ring"/>
    <property type="evidence" value="ECO:0007669"/>
    <property type="project" value="EnsemblFungi"/>
</dbReference>
<dbReference type="GO" id="GO:0032152">
    <property type="term" value="C:meiotic septin complex"/>
    <property type="evidence" value="ECO:0007669"/>
    <property type="project" value="EnsemblFungi"/>
</dbReference>
<dbReference type="GO" id="GO:0072687">
    <property type="term" value="C:meiotic spindle"/>
    <property type="evidence" value="ECO:0007669"/>
    <property type="project" value="EnsemblFungi"/>
</dbReference>
<dbReference type="GO" id="GO:0015630">
    <property type="term" value="C:microtubule cytoskeleton"/>
    <property type="evidence" value="ECO:0000318"/>
    <property type="project" value="GO_Central"/>
</dbReference>
<dbReference type="GO" id="GO:0120104">
    <property type="term" value="C:mitotic actomyosin contractile ring, proximal layer"/>
    <property type="evidence" value="ECO:0007669"/>
    <property type="project" value="EnsemblFungi"/>
</dbReference>
<dbReference type="GO" id="GO:0032151">
    <property type="term" value="C:mitotic septin complex"/>
    <property type="evidence" value="ECO:0007669"/>
    <property type="project" value="EnsemblFungi"/>
</dbReference>
<dbReference type="GO" id="GO:0005628">
    <property type="term" value="C:prospore membrane"/>
    <property type="evidence" value="ECO:0007669"/>
    <property type="project" value="EnsemblFungi"/>
</dbReference>
<dbReference type="GO" id="GO:0032169">
    <property type="term" value="C:prospore septin ring"/>
    <property type="evidence" value="ECO:0007669"/>
    <property type="project" value="EnsemblFungi"/>
</dbReference>
<dbReference type="GO" id="GO:0031105">
    <property type="term" value="C:septin complex"/>
    <property type="evidence" value="ECO:0000318"/>
    <property type="project" value="GO_Central"/>
</dbReference>
<dbReference type="GO" id="GO:0032160">
    <property type="term" value="C:septin filament array"/>
    <property type="evidence" value="ECO:0007669"/>
    <property type="project" value="EnsemblFungi"/>
</dbReference>
<dbReference type="GO" id="GO:0005940">
    <property type="term" value="C:septin ring"/>
    <property type="evidence" value="ECO:0000314"/>
    <property type="project" value="CGD"/>
</dbReference>
<dbReference type="GO" id="GO:0005876">
    <property type="term" value="C:spindle microtubule"/>
    <property type="evidence" value="ECO:0007669"/>
    <property type="project" value="EnsemblFungi"/>
</dbReference>
<dbReference type="GO" id="GO:0005545">
    <property type="term" value="F:1-phosphatidylinositol binding"/>
    <property type="evidence" value="ECO:0007669"/>
    <property type="project" value="EnsemblFungi"/>
</dbReference>
<dbReference type="GO" id="GO:0005525">
    <property type="term" value="F:GTP binding"/>
    <property type="evidence" value="ECO:0007669"/>
    <property type="project" value="UniProtKB-KW"/>
</dbReference>
<dbReference type="GO" id="GO:0003924">
    <property type="term" value="F:GTPase activity"/>
    <property type="evidence" value="ECO:0000318"/>
    <property type="project" value="GO_Central"/>
</dbReference>
<dbReference type="GO" id="GO:0060090">
    <property type="term" value="F:molecular adaptor activity"/>
    <property type="evidence" value="ECO:0000318"/>
    <property type="project" value="GO_Central"/>
</dbReference>
<dbReference type="GO" id="GO:0070273">
    <property type="term" value="F:phosphatidylinositol-4-phosphate binding"/>
    <property type="evidence" value="ECO:0007669"/>
    <property type="project" value="EnsemblFungi"/>
</dbReference>
<dbReference type="GO" id="GO:0010314">
    <property type="term" value="F:phosphatidylinositol-5-phosphate binding"/>
    <property type="evidence" value="ECO:0007669"/>
    <property type="project" value="EnsemblFungi"/>
</dbReference>
<dbReference type="GO" id="GO:0005200">
    <property type="term" value="F:structural constituent of cytoskeleton"/>
    <property type="evidence" value="ECO:0007669"/>
    <property type="project" value="EnsemblFungi"/>
</dbReference>
<dbReference type="GO" id="GO:0044406">
    <property type="term" value="P:adhesion of symbiont to host"/>
    <property type="evidence" value="ECO:0000315"/>
    <property type="project" value="CGD"/>
</dbReference>
<dbReference type="GO" id="GO:0006033">
    <property type="term" value="P:chitin localization"/>
    <property type="evidence" value="ECO:0000315"/>
    <property type="project" value="CGD"/>
</dbReference>
<dbReference type="GO" id="GO:0001410">
    <property type="term" value="P:chlamydospore formation"/>
    <property type="evidence" value="ECO:0000315"/>
    <property type="project" value="CGD"/>
</dbReference>
<dbReference type="GO" id="GO:0061640">
    <property type="term" value="P:cytoskeleton-dependent cytokinesis"/>
    <property type="evidence" value="ECO:0000318"/>
    <property type="project" value="GO_Central"/>
</dbReference>
<dbReference type="GO" id="GO:0010458">
    <property type="term" value="P:exit from mitosis"/>
    <property type="evidence" value="ECO:0007669"/>
    <property type="project" value="EnsemblFungi"/>
</dbReference>
<dbReference type="GO" id="GO:0031505">
    <property type="term" value="P:fungal-type cell wall organization"/>
    <property type="evidence" value="ECO:0000315"/>
    <property type="project" value="CGD"/>
</dbReference>
<dbReference type="GO" id="GO:0070783">
    <property type="term" value="P:growth of unicellular organism as a thread of attached cells"/>
    <property type="evidence" value="ECO:0000315"/>
    <property type="project" value="CGD"/>
</dbReference>
<dbReference type="GO" id="GO:0030448">
    <property type="term" value="P:hyphal growth"/>
    <property type="evidence" value="ECO:0000315"/>
    <property type="project" value="CGD"/>
</dbReference>
<dbReference type="GO" id="GO:0000281">
    <property type="term" value="P:mitotic cytokinesis"/>
    <property type="evidence" value="ECO:0007669"/>
    <property type="project" value="EnsemblFungi"/>
</dbReference>
<dbReference type="GO" id="GO:0007097">
    <property type="term" value="P:nuclear migration"/>
    <property type="evidence" value="ECO:0000315"/>
    <property type="project" value="CGD"/>
</dbReference>
<dbReference type="GO" id="GO:0008104">
    <property type="term" value="P:protein localization"/>
    <property type="evidence" value="ECO:0000315"/>
    <property type="project" value="CGD"/>
</dbReference>
<dbReference type="GO" id="GO:0000921">
    <property type="term" value="P:septin ring assembly"/>
    <property type="evidence" value="ECO:0000315"/>
    <property type="project" value="CGD"/>
</dbReference>
<dbReference type="GO" id="GO:0070583">
    <property type="term" value="P:spore membrane bending pathway"/>
    <property type="evidence" value="ECO:0007669"/>
    <property type="project" value="EnsemblFungi"/>
</dbReference>
<dbReference type="CDD" id="cd01850">
    <property type="entry name" value="CDC_Septin"/>
    <property type="match status" value="1"/>
</dbReference>
<dbReference type="FunFam" id="3.40.50.300:FF:000260">
    <property type="entry name" value="Cell division control 10"/>
    <property type="match status" value="1"/>
</dbReference>
<dbReference type="Gene3D" id="3.40.50.300">
    <property type="entry name" value="P-loop containing nucleotide triphosphate hydrolases"/>
    <property type="match status" value="1"/>
</dbReference>
<dbReference type="InterPro" id="IPR030379">
    <property type="entry name" value="G_SEPTIN_dom"/>
</dbReference>
<dbReference type="InterPro" id="IPR027417">
    <property type="entry name" value="P-loop_NTPase"/>
</dbReference>
<dbReference type="InterPro" id="IPR016491">
    <property type="entry name" value="Septin"/>
</dbReference>
<dbReference type="PANTHER" id="PTHR18884">
    <property type="entry name" value="SEPTIN"/>
    <property type="match status" value="1"/>
</dbReference>
<dbReference type="Pfam" id="PF00735">
    <property type="entry name" value="Septin"/>
    <property type="match status" value="1"/>
</dbReference>
<dbReference type="PIRSF" id="PIRSF006698">
    <property type="entry name" value="Septin"/>
    <property type="match status" value="1"/>
</dbReference>
<dbReference type="SUPFAM" id="SSF52540">
    <property type="entry name" value="P-loop containing nucleoside triphosphate hydrolases"/>
    <property type="match status" value="1"/>
</dbReference>
<dbReference type="PROSITE" id="PS51719">
    <property type="entry name" value="G_SEPTIN"/>
    <property type="match status" value="1"/>
</dbReference>
<accession>P39827</accession>
<accession>A0A1D8PSR7</accession>
<accession>Q5A6K6</accession>
<keyword id="KW-0131">Cell cycle</keyword>
<keyword id="KW-0132">Cell division</keyword>
<keyword id="KW-0342">GTP-binding</keyword>
<keyword id="KW-0547">Nucleotide-binding</keyword>
<keyword id="KW-1185">Reference proteome</keyword>
<sequence>MSIEEPSTQHIAQPQKYVGFDTITTQIENRLLKRGFQFNIMVVGRSGLGKSTLVNTLFSSKLTTSQGRKSPSEPIEKTTEIKVASHSLLENNVRLNINVIDTPGFGDQINNEKCWEPLVKYVKEQHSQYLRKELTAQRDKFLADTRVHCILYFIPPNGQKLKQLDVQALKKLSEIANVVPIIAKSDSLTLDERSEFKKLLQSEFMKYNFNIYPYDSEDLYEEERQLNEDIKSLIPFAIAGSETEIEINGEMVRGRKTKWGAINIEDVSQCEFVFLRDFLTRTHLQDLIETTALTHYETFRSKQLIALKENASNPNRQSQLQKDQGQTSQQSNQDLKNTSGVPNAPMFQSTTGTAAAR</sequence>